<reference key="1">
    <citation type="journal article" date="1999" name="Mol. Microbiol.">
        <title>The hprK gene of Enterococcus faecalis encodes a novel bifunctional enzyme: the HPr kinase/phosphatase.</title>
        <authorList>
            <person name="Kravanja M."/>
            <person name="Engelmann R."/>
            <person name="Dossonnet V."/>
            <person name="Bluggel M."/>
            <person name="Meyer H.E."/>
            <person name="Frank R."/>
            <person name="Galinier A."/>
            <person name="Deutscher J."/>
            <person name="Schnell N."/>
            <person name="Hengstenberg W."/>
        </authorList>
    </citation>
    <scope>NUCLEOTIDE SEQUENCE [GENOMIC DNA]</scope>
    <scope>PARTIAL PROTEIN SEQUENCE</scope>
    <scope>CHARACTERIZATION</scope>
    <source>
        <strain>26487</strain>
    </source>
</reference>
<reference key="2">
    <citation type="journal article" date="2003" name="Science">
        <title>Role of mobile DNA in the evolution of vancomycin-resistant Enterococcus faecalis.</title>
        <authorList>
            <person name="Paulsen I.T."/>
            <person name="Banerjei L."/>
            <person name="Myers G.S.A."/>
            <person name="Nelson K.E."/>
            <person name="Seshadri R."/>
            <person name="Read T.D."/>
            <person name="Fouts D.E."/>
            <person name="Eisen J.A."/>
            <person name="Gill S.R."/>
            <person name="Heidelberg J.F."/>
            <person name="Tettelin H."/>
            <person name="Dodson R.J."/>
            <person name="Umayam L.A."/>
            <person name="Brinkac L.M."/>
            <person name="Beanan M.J."/>
            <person name="Daugherty S.C."/>
            <person name="DeBoy R.T."/>
            <person name="Durkin S.A."/>
            <person name="Kolonay J.F."/>
            <person name="Madupu R."/>
            <person name="Nelson W.C."/>
            <person name="Vamathevan J.J."/>
            <person name="Tran B."/>
            <person name="Upton J."/>
            <person name="Hansen T."/>
            <person name="Shetty J."/>
            <person name="Khouri H.M."/>
            <person name="Utterback T.R."/>
            <person name="Radune D."/>
            <person name="Ketchum K.A."/>
            <person name="Dougherty B.A."/>
            <person name="Fraser C.M."/>
        </authorList>
    </citation>
    <scope>NUCLEOTIDE SEQUENCE [LARGE SCALE GENOMIC DNA]</scope>
    <source>
        <strain>ATCC 700802 / V583</strain>
    </source>
</reference>
<sequence length="311" mass="34821">MTEVVKIYQLVENLSLEVVYGDEESLNRTIKTGEISRPGLELTGYFNYYSHDRLQLFGSKEITFAERMMPEERLLVMRRLCAKDTPAFIVSRGLEIPEELITAAKENGVSVLRSPISTSRLLGELSSYLDGRLAVRTSVHGVLVDVYGLGVLIQGDSGIGKSETALELIKRGHRLIADDRVDVYQQDELTVVGEPPKILQHLIEIRGIGIIDVMNLFGASAVRGFMQVQLVVYLEAWEKDKKYDRLGSDDAMVEIANVDVPQIRIPVKTGRNVAIIIEVAAMNFRAKTMGYDATKTFEERLTRLIEENSGE</sequence>
<evidence type="ECO:0000250" key="1"/>
<evidence type="ECO:0000255" key="2"/>
<evidence type="ECO:0000305" key="3"/>
<gene>
    <name type="primary">hprK</name>
    <name type="ordered locus">EF_1749</name>
</gene>
<feature type="chain" id="PRO_0000058955" description="HPr kinase/phosphorylase">
    <location>
        <begin position="1"/>
        <end position="311"/>
    </location>
</feature>
<feature type="region of interest" description="Important for the catalytic mechanism of both phosphorylation and dephosphorylation" evidence="1">
    <location>
        <begin position="203"/>
        <end position="212"/>
    </location>
</feature>
<feature type="region of interest" description="Important for the catalytic mechanism of dephosphorylation" evidence="1">
    <location>
        <begin position="266"/>
        <end position="271"/>
    </location>
</feature>
<feature type="active site" evidence="1">
    <location>
        <position position="140"/>
    </location>
</feature>
<feature type="active site" evidence="1">
    <location>
        <position position="161"/>
    </location>
</feature>
<feature type="active site" description="Proton acceptor; for phosphorylation activity. Proton donor; for dephosphorylation activity" evidence="1">
    <location>
        <position position="179"/>
    </location>
</feature>
<feature type="active site" evidence="1">
    <location>
        <position position="245"/>
    </location>
</feature>
<feature type="binding site" evidence="1">
    <location>
        <begin position="155"/>
        <end position="162"/>
    </location>
    <ligand>
        <name>ATP</name>
        <dbReference type="ChEBI" id="CHEBI:30616"/>
    </ligand>
</feature>
<feature type="binding site" evidence="2">
    <location>
        <position position="162"/>
    </location>
    <ligand>
        <name>Mg(2+)</name>
        <dbReference type="ChEBI" id="CHEBI:18420"/>
    </ligand>
</feature>
<feature type="binding site" evidence="2">
    <location>
        <position position="204"/>
    </location>
    <ligand>
        <name>Mg(2+)</name>
        <dbReference type="ChEBI" id="CHEBI:18420"/>
    </ligand>
</feature>
<feature type="sequence conflict" description="In Ref. 1; AA sequence." evidence="3" ref="1">
    <original>MT</original>
    <variation>M</variation>
    <location>
        <begin position="1"/>
        <end position="2"/>
    </location>
</feature>
<organism>
    <name type="scientific">Enterococcus faecalis (strain ATCC 700802 / V583)</name>
    <dbReference type="NCBI Taxonomy" id="226185"/>
    <lineage>
        <taxon>Bacteria</taxon>
        <taxon>Bacillati</taxon>
        <taxon>Bacillota</taxon>
        <taxon>Bacilli</taxon>
        <taxon>Lactobacillales</taxon>
        <taxon>Enterococcaceae</taxon>
        <taxon>Enterococcus</taxon>
    </lineage>
</organism>
<comment type="function">
    <text evidence="1">Catalyzes the ATP- as well as the pyrophosphate-dependent phosphorylation of a specific serine residue in HPr, a phosphocarrier protein of the phosphoenolpyruvate-dependent sugar phosphotransferase system (PTS). HprK/P also catalyzes the pyrophosphate-producing, inorganic phosphate-dependent dephosphorylation (phosphorolysis) of seryl-phosphorylated HPr (P-Ser-HPr). The two antagonistic activities of HprK/P are regulated by several intracellular metabolites, which change their concentration in response to the absence or presence of rapidly metabolisable carbon sources (glucose, fructose, etc.) in the growth medium. Therefore, by controlling the phosphorylation state of HPr, HPrK/P is a sensor enzyme that plays a major role in the regulation of carbon metabolism and sugar transport: it mediates carbon catabolite repression (CCR), and regulates PTS-catalyzed carbohydrate uptake and inducer exclusion (By similarity).</text>
</comment>
<comment type="catalytic activity">
    <reaction>
        <text>[HPr protein]-L-serine + ATP = [HPr protein]-O-phospho-L-serine + ADP + H(+)</text>
        <dbReference type="Rhea" id="RHEA:46600"/>
        <dbReference type="Rhea" id="RHEA-COMP:11602"/>
        <dbReference type="Rhea" id="RHEA-COMP:11603"/>
        <dbReference type="ChEBI" id="CHEBI:15378"/>
        <dbReference type="ChEBI" id="CHEBI:29999"/>
        <dbReference type="ChEBI" id="CHEBI:30616"/>
        <dbReference type="ChEBI" id="CHEBI:83421"/>
        <dbReference type="ChEBI" id="CHEBI:456216"/>
    </reaction>
</comment>
<comment type="catalytic activity">
    <reaction>
        <text>[HPr protein]-O-phospho-L-serine + phosphate + H(+) = [HPr protein]-L-serine + diphosphate</text>
        <dbReference type="Rhea" id="RHEA:46604"/>
        <dbReference type="Rhea" id="RHEA-COMP:11602"/>
        <dbReference type="Rhea" id="RHEA-COMP:11603"/>
        <dbReference type="ChEBI" id="CHEBI:15378"/>
        <dbReference type="ChEBI" id="CHEBI:29999"/>
        <dbReference type="ChEBI" id="CHEBI:33019"/>
        <dbReference type="ChEBI" id="CHEBI:43474"/>
        <dbReference type="ChEBI" id="CHEBI:83421"/>
    </reaction>
</comment>
<comment type="cofactor">
    <cofactor evidence="1">
        <name>Mg(2+)</name>
        <dbReference type="ChEBI" id="CHEBI:18420"/>
    </cofactor>
</comment>
<comment type="subunit">
    <text evidence="1">Homohexamer.</text>
</comment>
<comment type="domain">
    <text evidence="1">The Walker A ATP-binding motif also binds Pi and PPi.</text>
</comment>
<comment type="miscellaneous">
    <text evidence="1">Both phosphorylation and phosphorolysis are carried out by the same active site and suggest a common mechanism for both reactions.</text>
</comment>
<comment type="similarity">
    <text evidence="3">Belongs to the HPrK/P family.</text>
</comment>
<name>HPRK_ENTFA</name>
<protein>
    <recommendedName>
        <fullName>HPr kinase/phosphorylase</fullName>
        <shortName>HPrK/P</shortName>
        <ecNumber>2.7.11.-</ecNumber>
        <ecNumber>2.7.4.-</ecNumber>
    </recommendedName>
    <alternativeName>
        <fullName>HPr(Ser) kinase/phosphorylase</fullName>
    </alternativeName>
</protein>
<keyword id="KW-0067">ATP-binding</keyword>
<keyword id="KW-0119">Carbohydrate metabolism</keyword>
<keyword id="KW-0903">Direct protein sequencing</keyword>
<keyword id="KW-0418">Kinase</keyword>
<keyword id="KW-0460">Magnesium</keyword>
<keyword id="KW-0479">Metal-binding</keyword>
<keyword id="KW-0511">Multifunctional enzyme</keyword>
<keyword id="KW-0547">Nucleotide-binding</keyword>
<keyword id="KW-1185">Reference proteome</keyword>
<keyword id="KW-0723">Serine/threonine-protein kinase</keyword>
<keyword id="KW-0808">Transferase</keyword>
<dbReference type="EC" id="2.7.11.-"/>
<dbReference type="EC" id="2.7.4.-"/>
<dbReference type="EMBL" id="Y14027">
    <property type="protein sequence ID" value="CAA74357.1"/>
    <property type="molecule type" value="Genomic_DNA"/>
</dbReference>
<dbReference type="EMBL" id="AE016830">
    <property type="protein sequence ID" value="AAO81522.1"/>
    <property type="molecule type" value="Genomic_DNA"/>
</dbReference>
<dbReference type="RefSeq" id="NP_815452.1">
    <property type="nucleotide sequence ID" value="NC_004668.1"/>
</dbReference>
<dbReference type="RefSeq" id="WP_002357309.1">
    <property type="nucleotide sequence ID" value="NZ_KE136528.1"/>
</dbReference>
<dbReference type="SMR" id="O07664"/>
<dbReference type="STRING" id="226185.EF_1749"/>
<dbReference type="EnsemblBacteria" id="AAO81522">
    <property type="protein sequence ID" value="AAO81522"/>
    <property type="gene ID" value="EF_1749"/>
</dbReference>
<dbReference type="GeneID" id="60894042"/>
<dbReference type="KEGG" id="efa:EF1749"/>
<dbReference type="PATRIC" id="fig|226185.45.peg.1766"/>
<dbReference type="eggNOG" id="COG1493">
    <property type="taxonomic scope" value="Bacteria"/>
</dbReference>
<dbReference type="HOGENOM" id="CLU_052030_0_1_9"/>
<dbReference type="Proteomes" id="UP000001415">
    <property type="component" value="Chromosome"/>
</dbReference>
<dbReference type="GO" id="GO:0005524">
    <property type="term" value="F:ATP binding"/>
    <property type="evidence" value="ECO:0007669"/>
    <property type="project" value="UniProtKB-UniRule"/>
</dbReference>
<dbReference type="GO" id="GO:0000287">
    <property type="term" value="F:magnesium ion binding"/>
    <property type="evidence" value="ECO:0007669"/>
    <property type="project" value="UniProtKB-UniRule"/>
</dbReference>
<dbReference type="GO" id="GO:0000155">
    <property type="term" value="F:phosphorelay sensor kinase activity"/>
    <property type="evidence" value="ECO:0007669"/>
    <property type="project" value="InterPro"/>
</dbReference>
<dbReference type="GO" id="GO:0004674">
    <property type="term" value="F:protein serine/threonine kinase activity"/>
    <property type="evidence" value="ECO:0007669"/>
    <property type="project" value="UniProtKB-KW"/>
</dbReference>
<dbReference type="GO" id="GO:0004712">
    <property type="term" value="F:protein serine/threonine/tyrosine kinase activity"/>
    <property type="evidence" value="ECO:0007669"/>
    <property type="project" value="UniProtKB-UniRule"/>
</dbReference>
<dbReference type="GO" id="GO:0006109">
    <property type="term" value="P:regulation of carbohydrate metabolic process"/>
    <property type="evidence" value="ECO:0007669"/>
    <property type="project" value="UniProtKB-UniRule"/>
</dbReference>
<dbReference type="CDD" id="cd01918">
    <property type="entry name" value="HprK_C"/>
    <property type="match status" value="1"/>
</dbReference>
<dbReference type="FunFam" id="3.40.50.300:FF:000174">
    <property type="entry name" value="HPr kinase/phosphorylase"/>
    <property type="match status" value="1"/>
</dbReference>
<dbReference type="Gene3D" id="3.40.1390.20">
    <property type="entry name" value="HprK N-terminal domain-like"/>
    <property type="match status" value="1"/>
</dbReference>
<dbReference type="Gene3D" id="3.40.50.300">
    <property type="entry name" value="P-loop containing nucleotide triphosphate hydrolases"/>
    <property type="match status" value="1"/>
</dbReference>
<dbReference type="HAMAP" id="MF_01249">
    <property type="entry name" value="HPr_kinase"/>
    <property type="match status" value="1"/>
</dbReference>
<dbReference type="InterPro" id="IPR003755">
    <property type="entry name" value="HPr(Ser)_kin/Pase"/>
</dbReference>
<dbReference type="InterPro" id="IPR011104">
    <property type="entry name" value="Hpr_kin/Pase_C"/>
</dbReference>
<dbReference type="InterPro" id="IPR011126">
    <property type="entry name" value="Hpr_kin/Pase_Hpr_N"/>
</dbReference>
<dbReference type="InterPro" id="IPR027417">
    <property type="entry name" value="P-loop_NTPase"/>
</dbReference>
<dbReference type="InterPro" id="IPR028979">
    <property type="entry name" value="Ser_kin/Pase_Hpr-like_N_sf"/>
</dbReference>
<dbReference type="NCBIfam" id="TIGR00679">
    <property type="entry name" value="hpr-ser"/>
    <property type="match status" value="1"/>
</dbReference>
<dbReference type="PANTHER" id="PTHR30305:SF1">
    <property type="entry name" value="HPR KINASE_PHOSPHORYLASE"/>
    <property type="match status" value="1"/>
</dbReference>
<dbReference type="PANTHER" id="PTHR30305">
    <property type="entry name" value="PROTEIN YJDM-RELATED"/>
    <property type="match status" value="1"/>
</dbReference>
<dbReference type="Pfam" id="PF07475">
    <property type="entry name" value="Hpr_kinase_C"/>
    <property type="match status" value="1"/>
</dbReference>
<dbReference type="Pfam" id="PF02603">
    <property type="entry name" value="Hpr_kinase_N"/>
    <property type="match status" value="1"/>
</dbReference>
<dbReference type="SUPFAM" id="SSF75138">
    <property type="entry name" value="HprK N-terminal domain-like"/>
    <property type="match status" value="1"/>
</dbReference>
<dbReference type="SUPFAM" id="SSF53795">
    <property type="entry name" value="PEP carboxykinase-like"/>
    <property type="match status" value="1"/>
</dbReference>
<proteinExistence type="evidence at protein level"/>
<accession>O07664</accession>